<reference key="1">
    <citation type="journal article" date="1995" name="Virology">
        <title>Analysis of the complete nucleotide sequence of African swine fever virus.</title>
        <authorList>
            <person name="Yanez R.J."/>
            <person name="Rodriguez J.M."/>
            <person name="Nogal M.L."/>
            <person name="Yuste L."/>
            <person name="Enriquez C."/>
            <person name="Rodriguez J.F."/>
            <person name="Vinuela E."/>
        </authorList>
    </citation>
    <scope>NUCLEOTIDE SEQUENCE [LARGE SCALE GENOMIC DNA]</scope>
</reference>
<reference key="2">
    <citation type="journal article" date="2006" name="J. Virol.">
        <title>African swine fever virus pB119L protein is a flavin adenine dinucleotide-linked sulfhydryl oxidase.</title>
        <authorList>
            <person name="Rodriguez I."/>
            <person name="Redrejo-Rodriguez M."/>
            <person name="Rodriguez J.M."/>
            <person name="Alejo A."/>
            <person name="Salas J."/>
            <person name="Salas M.L."/>
        </authorList>
    </citation>
    <scope>INTERACTION WITH B119L AND E248R</scope>
</reference>
<reference key="3">
    <citation type="journal article" date="2020" name="J. Virol.">
        <title>The African Swine Fever Virus Transcriptome.</title>
        <authorList>
            <person name="Cackett G."/>
            <person name="Matelska D."/>
            <person name="Sykora M."/>
            <person name="Portugal R."/>
            <person name="Malecki M."/>
            <person name="Baehler J."/>
            <person name="Dixon L."/>
            <person name="Werner F."/>
        </authorList>
    </citation>
    <scope>INDUCTION</scope>
</reference>
<reference key="4">
    <citation type="journal article" date="2020" name="Biochem. Biophys. Res. Commun.">
        <title>Structure basis of non-structural protein pA151R from African Swine Fever Virus.</title>
        <authorList>
            <person name="Huang J.W."/>
            <person name="Niu D."/>
            <person name="Liu K."/>
            <person name="Wang Q."/>
            <person name="Ma L."/>
            <person name="Chen C.C."/>
            <person name="Zhang L."/>
            <person name="Liu W."/>
            <person name="Zhou S."/>
            <person name="Min J."/>
            <person name="Wu S."/>
            <person name="Yang Y."/>
            <person name="Guo R.T."/>
        </authorList>
    </citation>
    <scope>COFACTOR</scope>
    <scope>SUBUNIT</scope>
    <source>
        <strain>Georgia 2007/1</strain>
    </source>
</reference>
<proteinExistence type="evidence at protein level"/>
<sequence>MMALLHKEKLIECIENEVLSGGTVLLLVKNIVVSEISYIDNSYKYFTFNANHDLKSKEDLKGATSNNIAKMIYNWIIKNPQNNKIWSGEPRTQIYFENDLYHTNYNHECIKDFWDVSTSVGPCIFNDRSIWCTKCTSFYPFTNIMSPNIFQ</sequence>
<accession>Q65140</accession>
<comment type="function">
    <text evidence="3">May participate in a redox cascade for the formation of disulfide bonds in viral proteins.</text>
</comment>
<comment type="cofactor">
    <cofactor evidence="3">
        <name>Zn(2+)</name>
        <dbReference type="ChEBI" id="CHEBI:29105"/>
    </cofactor>
    <text evidence="3">Binds 1 Zn(2+) ion.</text>
</comment>
<comment type="subunit">
    <text evidence="1 3">Monomer (PubMed:32828542). Homodimer (PubMed:32828542). Interacts with protein B119L (PubMed:16537584). Interacts with membrane protein E248R (PubMed:16537584).</text>
</comment>
<comment type="induction">
    <text evidence="2">Expressed in the early phase of the viral replicative cycle.</text>
</comment>
<comment type="similarity">
    <text evidence="4">Belongs to the asfivirus A151R family.</text>
</comment>
<keyword id="KW-0244">Early protein</keyword>
<keyword id="KW-0479">Metal-binding</keyword>
<keyword id="KW-1185">Reference proteome</keyword>
<keyword id="KW-0862">Zinc</keyword>
<evidence type="ECO:0000269" key="1">
    <source>
    </source>
</evidence>
<evidence type="ECO:0000269" key="2">
    <source>
    </source>
</evidence>
<evidence type="ECO:0000269" key="3">
    <source>
    </source>
</evidence>
<evidence type="ECO:0000305" key="4"/>
<gene>
    <name type="ordered locus">Ba71V-037</name>
    <name type="ORF">A151R</name>
</gene>
<protein>
    <recommendedName>
        <fullName>Protein A151R</fullName>
        <shortName>pA151R</shortName>
    </recommendedName>
</protein>
<feature type="chain" id="PRO_0000373529" description="Protein A151R">
    <location>
        <begin position="1"/>
        <end position="151"/>
    </location>
</feature>
<feature type="short sequence motif" description="Thioredoxin WCTKC motif" evidence="3">
    <location>
        <begin position="131"/>
        <end position="135"/>
    </location>
</feature>
<feature type="binding site" evidence="3">
    <location>
        <position position="102"/>
    </location>
    <ligand>
        <name>Zn(2+)</name>
        <dbReference type="ChEBI" id="CHEBI:29105"/>
    </ligand>
</feature>
<feature type="binding site" evidence="3">
    <location>
        <position position="109"/>
    </location>
    <ligand>
        <name>Zn(2+)</name>
        <dbReference type="ChEBI" id="CHEBI:29105"/>
    </ligand>
</feature>
<feature type="binding site" evidence="3">
    <location>
        <position position="132"/>
    </location>
    <ligand>
        <name>Zn(2+)</name>
        <dbReference type="ChEBI" id="CHEBI:29105"/>
    </ligand>
</feature>
<feature type="binding site" evidence="3">
    <location>
        <position position="135"/>
    </location>
    <ligand>
        <name>Zn(2+)</name>
        <dbReference type="ChEBI" id="CHEBI:29105"/>
    </ligand>
</feature>
<dbReference type="EMBL" id="U18466">
    <property type="protein sequence ID" value="AAA65267.1"/>
    <property type="molecule type" value="Genomic_DNA"/>
</dbReference>
<dbReference type="RefSeq" id="NP_042731.1">
    <property type="nucleotide sequence ID" value="NC_001659.2"/>
</dbReference>
<dbReference type="SMR" id="Q65140"/>
<dbReference type="GeneID" id="22220419"/>
<dbReference type="KEGG" id="vg:22220419"/>
<dbReference type="Proteomes" id="UP000000624">
    <property type="component" value="Segment"/>
</dbReference>
<dbReference type="GO" id="GO:0046872">
    <property type="term" value="F:metal ion binding"/>
    <property type="evidence" value="ECO:0007669"/>
    <property type="project" value="UniProtKB-KW"/>
</dbReference>
<organism>
    <name type="scientific">African swine fever virus (strain Badajoz 1971 Vero-adapted)</name>
    <name type="common">Ba71V</name>
    <name type="synonym">ASFV</name>
    <dbReference type="NCBI Taxonomy" id="10498"/>
    <lineage>
        <taxon>Viruses</taxon>
        <taxon>Varidnaviria</taxon>
        <taxon>Bamfordvirae</taxon>
        <taxon>Nucleocytoviricota</taxon>
        <taxon>Pokkesviricetes</taxon>
        <taxon>Asfuvirales</taxon>
        <taxon>Asfarviridae</taxon>
        <taxon>Asfivirus</taxon>
        <taxon>African swine fever virus</taxon>
    </lineage>
</organism>
<name>VF151_ASFB7</name>
<organismHost>
    <name type="scientific">Ornithodoros</name>
    <name type="common">relapsing fever ticks</name>
    <dbReference type="NCBI Taxonomy" id="6937"/>
</organismHost>
<organismHost>
    <name type="scientific">Sus scrofa</name>
    <name type="common">Pig</name>
    <dbReference type="NCBI Taxonomy" id="9823"/>
</organismHost>